<accession>O84127</accession>
<keyword id="KW-1185">Reference proteome</keyword>
<keyword id="KW-0687">Ribonucleoprotein</keyword>
<keyword id="KW-0689">Ribosomal protein</keyword>
<proteinExistence type="inferred from homology"/>
<feature type="chain" id="PRO_0000133732" description="Large ribosomal subunit protein uL13">
    <location>
        <begin position="1"/>
        <end position="150"/>
    </location>
</feature>
<protein>
    <recommendedName>
        <fullName evidence="1">Large ribosomal subunit protein uL13</fullName>
    </recommendedName>
    <alternativeName>
        <fullName evidence="2">50S ribosomal protein L13</fullName>
    </alternativeName>
</protein>
<gene>
    <name evidence="1" type="primary">rplM</name>
    <name type="synonym">rl13</name>
    <name type="ordered locus">CT_125</name>
</gene>
<sequence length="150" mass="16850">MEKRKDTKTTLAKASDDRNKAWYVVNAEGKTLGRLSSEVAKILRGKHKVTFTPHVAMGDGVIVINAEKVRLTGAKRAQKVYHYYTGFISGMREVPFENMIARKPAYVIEHAVKGMLPKTKLGRRQMKSLRVLKGSSYAQYEAIKPIVLDA</sequence>
<comment type="function">
    <text evidence="1">This protein is one of the early assembly proteins of the 50S ribosomal subunit, although it is not seen to bind rRNA by itself. It is important during the early stages of 50S assembly.</text>
</comment>
<comment type="subunit">
    <text evidence="1">Part of the 50S ribosomal subunit.</text>
</comment>
<comment type="similarity">
    <text evidence="1">Belongs to the universal ribosomal protein uL13 family.</text>
</comment>
<dbReference type="EMBL" id="AE001273">
    <property type="protein sequence ID" value="AAC67716.1"/>
    <property type="molecule type" value="Genomic_DNA"/>
</dbReference>
<dbReference type="PIR" id="A71554">
    <property type="entry name" value="A71554"/>
</dbReference>
<dbReference type="RefSeq" id="NP_219628.1">
    <property type="nucleotide sequence ID" value="NC_000117.1"/>
</dbReference>
<dbReference type="RefSeq" id="WP_009871472.1">
    <property type="nucleotide sequence ID" value="NC_000117.1"/>
</dbReference>
<dbReference type="SMR" id="O84127"/>
<dbReference type="FunCoup" id="O84127">
    <property type="interactions" value="277"/>
</dbReference>
<dbReference type="STRING" id="272561.CT_125"/>
<dbReference type="EnsemblBacteria" id="AAC67716">
    <property type="protein sequence ID" value="AAC67716"/>
    <property type="gene ID" value="CT_125"/>
</dbReference>
<dbReference type="GeneID" id="884106"/>
<dbReference type="KEGG" id="ctr:CT_125"/>
<dbReference type="PATRIC" id="fig|272561.5.peg.137"/>
<dbReference type="HOGENOM" id="CLU_082184_2_2_0"/>
<dbReference type="InParanoid" id="O84127"/>
<dbReference type="OrthoDB" id="9801330at2"/>
<dbReference type="Proteomes" id="UP000000431">
    <property type="component" value="Chromosome"/>
</dbReference>
<dbReference type="GO" id="GO:0022625">
    <property type="term" value="C:cytosolic large ribosomal subunit"/>
    <property type="evidence" value="ECO:0000318"/>
    <property type="project" value="GO_Central"/>
</dbReference>
<dbReference type="GO" id="GO:0005840">
    <property type="term" value="C:ribosome"/>
    <property type="evidence" value="ECO:0000318"/>
    <property type="project" value="GO_Central"/>
</dbReference>
<dbReference type="GO" id="GO:0003729">
    <property type="term" value="F:mRNA binding"/>
    <property type="evidence" value="ECO:0000318"/>
    <property type="project" value="GO_Central"/>
</dbReference>
<dbReference type="GO" id="GO:0003735">
    <property type="term" value="F:structural constituent of ribosome"/>
    <property type="evidence" value="ECO:0000318"/>
    <property type="project" value="GO_Central"/>
</dbReference>
<dbReference type="GO" id="GO:0017148">
    <property type="term" value="P:negative regulation of translation"/>
    <property type="evidence" value="ECO:0000318"/>
    <property type="project" value="GO_Central"/>
</dbReference>
<dbReference type="GO" id="GO:0006412">
    <property type="term" value="P:translation"/>
    <property type="evidence" value="ECO:0007669"/>
    <property type="project" value="UniProtKB-UniRule"/>
</dbReference>
<dbReference type="CDD" id="cd00392">
    <property type="entry name" value="Ribosomal_L13"/>
    <property type="match status" value="1"/>
</dbReference>
<dbReference type="FunFam" id="3.90.1180.10:FF:000016">
    <property type="entry name" value="50S ribosomal protein L13"/>
    <property type="match status" value="1"/>
</dbReference>
<dbReference type="Gene3D" id="3.90.1180.10">
    <property type="entry name" value="Ribosomal protein L13"/>
    <property type="match status" value="1"/>
</dbReference>
<dbReference type="HAMAP" id="MF_01366">
    <property type="entry name" value="Ribosomal_uL13"/>
    <property type="match status" value="1"/>
</dbReference>
<dbReference type="InterPro" id="IPR005822">
    <property type="entry name" value="Ribosomal_uL13"/>
</dbReference>
<dbReference type="InterPro" id="IPR005823">
    <property type="entry name" value="Ribosomal_uL13_bac-type"/>
</dbReference>
<dbReference type="InterPro" id="IPR023563">
    <property type="entry name" value="Ribosomal_uL13_CS"/>
</dbReference>
<dbReference type="InterPro" id="IPR036899">
    <property type="entry name" value="Ribosomal_uL13_sf"/>
</dbReference>
<dbReference type="NCBIfam" id="TIGR01066">
    <property type="entry name" value="rplM_bact"/>
    <property type="match status" value="1"/>
</dbReference>
<dbReference type="PANTHER" id="PTHR11545:SF2">
    <property type="entry name" value="LARGE RIBOSOMAL SUBUNIT PROTEIN UL13M"/>
    <property type="match status" value="1"/>
</dbReference>
<dbReference type="PANTHER" id="PTHR11545">
    <property type="entry name" value="RIBOSOMAL PROTEIN L13"/>
    <property type="match status" value="1"/>
</dbReference>
<dbReference type="Pfam" id="PF00572">
    <property type="entry name" value="Ribosomal_L13"/>
    <property type="match status" value="1"/>
</dbReference>
<dbReference type="PIRSF" id="PIRSF002181">
    <property type="entry name" value="Ribosomal_L13"/>
    <property type="match status" value="1"/>
</dbReference>
<dbReference type="SUPFAM" id="SSF52161">
    <property type="entry name" value="Ribosomal protein L13"/>
    <property type="match status" value="1"/>
</dbReference>
<dbReference type="PROSITE" id="PS00783">
    <property type="entry name" value="RIBOSOMAL_L13"/>
    <property type="match status" value="1"/>
</dbReference>
<evidence type="ECO:0000255" key="1">
    <source>
        <dbReference type="HAMAP-Rule" id="MF_01366"/>
    </source>
</evidence>
<evidence type="ECO:0000305" key="2"/>
<name>RL13_CHLTR</name>
<reference key="1">
    <citation type="journal article" date="1998" name="Science">
        <title>Genome sequence of an obligate intracellular pathogen of humans: Chlamydia trachomatis.</title>
        <authorList>
            <person name="Stephens R.S."/>
            <person name="Kalman S."/>
            <person name="Lammel C.J."/>
            <person name="Fan J."/>
            <person name="Marathe R."/>
            <person name="Aravind L."/>
            <person name="Mitchell W.P."/>
            <person name="Olinger L."/>
            <person name="Tatusov R.L."/>
            <person name="Zhao Q."/>
            <person name="Koonin E.V."/>
            <person name="Davis R.W."/>
        </authorList>
    </citation>
    <scope>NUCLEOTIDE SEQUENCE [LARGE SCALE GENOMIC DNA]</scope>
    <source>
        <strain>ATCC VR-885 / DSM 19411 / UW-3/Cx</strain>
    </source>
</reference>
<organism>
    <name type="scientific">Chlamydia trachomatis serovar D (strain ATCC VR-885 / DSM 19411 / UW-3/Cx)</name>
    <dbReference type="NCBI Taxonomy" id="272561"/>
    <lineage>
        <taxon>Bacteria</taxon>
        <taxon>Pseudomonadati</taxon>
        <taxon>Chlamydiota</taxon>
        <taxon>Chlamydiia</taxon>
        <taxon>Chlamydiales</taxon>
        <taxon>Chlamydiaceae</taxon>
        <taxon>Chlamydia/Chlamydophila group</taxon>
        <taxon>Chlamydia</taxon>
    </lineage>
</organism>